<protein>
    <recommendedName>
        <fullName evidence="1">Large ribosomal subunit protein uL5</fullName>
    </recommendedName>
    <alternativeName>
        <fullName evidence="2">50S ribosomal protein L5</fullName>
    </alternativeName>
</protein>
<proteinExistence type="inferred from homology"/>
<name>RL5_RHIE6</name>
<organism>
    <name type="scientific">Rhizobium etli (strain CIAT 652)</name>
    <dbReference type="NCBI Taxonomy" id="491916"/>
    <lineage>
        <taxon>Bacteria</taxon>
        <taxon>Pseudomonadati</taxon>
        <taxon>Pseudomonadota</taxon>
        <taxon>Alphaproteobacteria</taxon>
        <taxon>Hyphomicrobiales</taxon>
        <taxon>Rhizobiaceae</taxon>
        <taxon>Rhizobium/Agrobacterium group</taxon>
        <taxon>Rhizobium</taxon>
    </lineage>
</organism>
<feature type="chain" id="PRO_1000142437" description="Large ribosomal subunit protein uL5">
    <location>
        <begin position="1"/>
        <end position="185"/>
    </location>
</feature>
<accession>B3PWT3</accession>
<comment type="function">
    <text evidence="1">This is one of the proteins that bind and probably mediate the attachment of the 5S RNA into the large ribosomal subunit, where it forms part of the central protuberance. In the 70S ribosome it contacts protein S13 of the 30S subunit (bridge B1b), connecting the 2 subunits; this bridge is implicated in subunit movement. Contacts the P site tRNA; the 5S rRNA and some of its associated proteins might help stabilize positioning of ribosome-bound tRNAs.</text>
</comment>
<comment type="subunit">
    <text evidence="1">Part of the 50S ribosomal subunit; part of the 5S rRNA/L5/L18/L25 subcomplex. Contacts the 5S rRNA and the P site tRNA. Forms a bridge to the 30S subunit in the 70S ribosome.</text>
</comment>
<comment type="similarity">
    <text evidence="1">Belongs to the universal ribosomal protein uL5 family.</text>
</comment>
<reference key="1">
    <citation type="journal article" date="2010" name="Appl. Environ. Microbiol.">
        <title>Conserved symbiotic plasmid DNA sequences in the multireplicon pangenomic structure of Rhizobium etli.</title>
        <authorList>
            <person name="Gonzalez V."/>
            <person name="Acosta J.L."/>
            <person name="Santamaria R.I."/>
            <person name="Bustos P."/>
            <person name="Fernandez J.L."/>
            <person name="Hernandez Gonzalez I.L."/>
            <person name="Diaz R."/>
            <person name="Flores M."/>
            <person name="Palacios R."/>
            <person name="Mora J."/>
            <person name="Davila G."/>
        </authorList>
    </citation>
    <scope>NUCLEOTIDE SEQUENCE [LARGE SCALE GENOMIC DNA]</scope>
    <source>
        <strain>CIAT 652</strain>
    </source>
</reference>
<gene>
    <name evidence="1" type="primary">rplE</name>
    <name type="ordered locus">RHECIAT_CH0001761</name>
</gene>
<evidence type="ECO:0000255" key="1">
    <source>
        <dbReference type="HAMAP-Rule" id="MF_01333"/>
    </source>
</evidence>
<evidence type="ECO:0000305" key="2"/>
<sequence length="185" mass="20951">MAEAKYEPRLKKEYVERIRKAMQEKFSYANEMMIPKLDKIVINMGVGEATADSKKPTVAAADLAAIAGQKPVITRARNSIAGFKVRENMPIGAKVTLRGARMYEFLDRLVNIALPRVRDFRGLNPKSFDGRGNFAMGIKEHIVFPEINYDKVDQMWGMDIIVCTTATTDDEARALLKEFSFPFRQ</sequence>
<keyword id="KW-0687">Ribonucleoprotein</keyword>
<keyword id="KW-0689">Ribosomal protein</keyword>
<keyword id="KW-0694">RNA-binding</keyword>
<keyword id="KW-0699">rRNA-binding</keyword>
<keyword id="KW-0820">tRNA-binding</keyword>
<dbReference type="EMBL" id="CP001074">
    <property type="protein sequence ID" value="ACE90731.1"/>
    <property type="molecule type" value="Genomic_DNA"/>
</dbReference>
<dbReference type="SMR" id="B3PWT3"/>
<dbReference type="KEGG" id="rec:RHECIAT_CH0001761"/>
<dbReference type="eggNOG" id="COG0094">
    <property type="taxonomic scope" value="Bacteria"/>
</dbReference>
<dbReference type="HOGENOM" id="CLU_061015_2_1_5"/>
<dbReference type="Proteomes" id="UP000008817">
    <property type="component" value="Chromosome"/>
</dbReference>
<dbReference type="GO" id="GO:1990904">
    <property type="term" value="C:ribonucleoprotein complex"/>
    <property type="evidence" value="ECO:0007669"/>
    <property type="project" value="UniProtKB-KW"/>
</dbReference>
<dbReference type="GO" id="GO:0005840">
    <property type="term" value="C:ribosome"/>
    <property type="evidence" value="ECO:0007669"/>
    <property type="project" value="UniProtKB-KW"/>
</dbReference>
<dbReference type="GO" id="GO:0019843">
    <property type="term" value="F:rRNA binding"/>
    <property type="evidence" value="ECO:0007669"/>
    <property type="project" value="UniProtKB-UniRule"/>
</dbReference>
<dbReference type="GO" id="GO:0003735">
    <property type="term" value="F:structural constituent of ribosome"/>
    <property type="evidence" value="ECO:0007669"/>
    <property type="project" value="InterPro"/>
</dbReference>
<dbReference type="GO" id="GO:0000049">
    <property type="term" value="F:tRNA binding"/>
    <property type="evidence" value="ECO:0007669"/>
    <property type="project" value="UniProtKB-UniRule"/>
</dbReference>
<dbReference type="GO" id="GO:0006412">
    <property type="term" value="P:translation"/>
    <property type="evidence" value="ECO:0007669"/>
    <property type="project" value="UniProtKB-UniRule"/>
</dbReference>
<dbReference type="FunFam" id="3.30.1440.10:FF:000001">
    <property type="entry name" value="50S ribosomal protein L5"/>
    <property type="match status" value="1"/>
</dbReference>
<dbReference type="Gene3D" id="3.30.1440.10">
    <property type="match status" value="1"/>
</dbReference>
<dbReference type="HAMAP" id="MF_01333_B">
    <property type="entry name" value="Ribosomal_uL5_B"/>
    <property type="match status" value="1"/>
</dbReference>
<dbReference type="InterPro" id="IPR002132">
    <property type="entry name" value="Ribosomal_uL5"/>
</dbReference>
<dbReference type="InterPro" id="IPR020930">
    <property type="entry name" value="Ribosomal_uL5_bac-type"/>
</dbReference>
<dbReference type="InterPro" id="IPR031309">
    <property type="entry name" value="Ribosomal_uL5_C"/>
</dbReference>
<dbReference type="InterPro" id="IPR020929">
    <property type="entry name" value="Ribosomal_uL5_CS"/>
</dbReference>
<dbReference type="InterPro" id="IPR022803">
    <property type="entry name" value="Ribosomal_uL5_dom_sf"/>
</dbReference>
<dbReference type="InterPro" id="IPR031310">
    <property type="entry name" value="Ribosomal_uL5_N"/>
</dbReference>
<dbReference type="NCBIfam" id="NF000585">
    <property type="entry name" value="PRK00010.1"/>
    <property type="match status" value="1"/>
</dbReference>
<dbReference type="PANTHER" id="PTHR11994">
    <property type="entry name" value="60S RIBOSOMAL PROTEIN L11-RELATED"/>
    <property type="match status" value="1"/>
</dbReference>
<dbReference type="Pfam" id="PF00281">
    <property type="entry name" value="Ribosomal_L5"/>
    <property type="match status" value="1"/>
</dbReference>
<dbReference type="Pfam" id="PF00673">
    <property type="entry name" value="Ribosomal_L5_C"/>
    <property type="match status" value="1"/>
</dbReference>
<dbReference type="PIRSF" id="PIRSF002161">
    <property type="entry name" value="Ribosomal_L5"/>
    <property type="match status" value="1"/>
</dbReference>
<dbReference type="SUPFAM" id="SSF55282">
    <property type="entry name" value="RL5-like"/>
    <property type="match status" value="1"/>
</dbReference>
<dbReference type="PROSITE" id="PS00358">
    <property type="entry name" value="RIBOSOMAL_L5"/>
    <property type="match status" value="1"/>
</dbReference>